<reference key="1">
    <citation type="submission" date="2008-02" db="EMBL/GenBank/DDBJ databases">
        <title>Complete sequence of Shewanella woodyi ATCC 51908.</title>
        <authorList>
            <consortium name="US DOE Joint Genome Institute"/>
            <person name="Copeland A."/>
            <person name="Lucas S."/>
            <person name="Lapidus A."/>
            <person name="Glavina del Rio T."/>
            <person name="Dalin E."/>
            <person name="Tice H."/>
            <person name="Bruce D."/>
            <person name="Goodwin L."/>
            <person name="Pitluck S."/>
            <person name="Sims D."/>
            <person name="Brettin T."/>
            <person name="Detter J.C."/>
            <person name="Han C."/>
            <person name="Kuske C.R."/>
            <person name="Schmutz J."/>
            <person name="Larimer F."/>
            <person name="Land M."/>
            <person name="Hauser L."/>
            <person name="Kyrpides N."/>
            <person name="Lykidis A."/>
            <person name="Zhao J.-S."/>
            <person name="Richardson P."/>
        </authorList>
    </citation>
    <scope>NUCLEOTIDE SEQUENCE [LARGE SCALE GENOMIC DNA]</scope>
    <source>
        <strain>ATCC 51908 / MS32</strain>
    </source>
</reference>
<gene>
    <name evidence="1" type="primary">cyoE2</name>
    <name type="ordered locus">Swoo_0429</name>
</gene>
<protein>
    <recommendedName>
        <fullName evidence="1">Protoheme IX farnesyltransferase 2</fullName>
        <ecNumber evidence="1">2.5.1.141</ecNumber>
    </recommendedName>
    <alternativeName>
        <fullName evidence="1">Heme B farnesyltransferase 2</fullName>
    </alternativeName>
    <alternativeName>
        <fullName evidence="1">Heme O synthase 2</fullName>
    </alternativeName>
</protein>
<sequence length="289" mass="31112">MIKPGIIMGNLISVTGGFLLAAKGSVDLTLMLMTILGLSLVVASGCGLNNCIDRDIDAKMQRTRNRVTVTGEISVYSVLVFSLALGLIGFGLLAIFTNKIALLFAVIGYLVYVGIYSLYMKRHSVYGTLIGSFSGAVPPVVGYCAVTGEIDTGAVILLLMFSLWQMPHSYAIAIFRYKDYAAAKIPVLPVAKGMTRAKLHIVLYIAVFSLVSALLPLAGYTGIAFMAVTCATSLWWLGMALKGYQRDINLNQWARQVFGCSIVTITALSIAMAMDFQLVVQTPLLTLSN</sequence>
<accession>B1KQ72</accession>
<organism>
    <name type="scientific">Shewanella woodyi (strain ATCC 51908 / MS32)</name>
    <dbReference type="NCBI Taxonomy" id="392500"/>
    <lineage>
        <taxon>Bacteria</taxon>
        <taxon>Pseudomonadati</taxon>
        <taxon>Pseudomonadota</taxon>
        <taxon>Gammaproteobacteria</taxon>
        <taxon>Alteromonadales</taxon>
        <taxon>Shewanellaceae</taxon>
        <taxon>Shewanella</taxon>
    </lineage>
</organism>
<feature type="chain" id="PRO_0000346018" description="Protoheme IX farnesyltransferase 2">
    <location>
        <begin position="1"/>
        <end position="289"/>
    </location>
</feature>
<feature type="transmembrane region" description="Helical" evidence="1">
    <location>
        <begin position="1"/>
        <end position="21"/>
    </location>
</feature>
<feature type="transmembrane region" description="Helical" evidence="1">
    <location>
        <begin position="28"/>
        <end position="48"/>
    </location>
</feature>
<feature type="transmembrane region" description="Helical" evidence="1">
    <location>
        <begin position="76"/>
        <end position="96"/>
    </location>
</feature>
<feature type="transmembrane region" description="Helical" evidence="1">
    <location>
        <begin position="100"/>
        <end position="120"/>
    </location>
</feature>
<feature type="transmembrane region" description="Helical" evidence="1">
    <location>
        <begin position="125"/>
        <end position="145"/>
    </location>
</feature>
<feature type="transmembrane region" description="Helical" evidence="1">
    <location>
        <begin position="155"/>
        <end position="175"/>
    </location>
</feature>
<feature type="transmembrane region" description="Helical" evidence="1">
    <location>
        <begin position="199"/>
        <end position="219"/>
    </location>
</feature>
<feature type="transmembrane region" description="Helical" evidence="1">
    <location>
        <begin position="221"/>
        <end position="241"/>
    </location>
</feature>
<feature type="transmembrane region" description="Helical" evidence="1">
    <location>
        <begin position="260"/>
        <end position="280"/>
    </location>
</feature>
<proteinExistence type="inferred from homology"/>
<keyword id="KW-0997">Cell inner membrane</keyword>
<keyword id="KW-1003">Cell membrane</keyword>
<keyword id="KW-0350">Heme biosynthesis</keyword>
<keyword id="KW-0472">Membrane</keyword>
<keyword id="KW-1185">Reference proteome</keyword>
<keyword id="KW-0808">Transferase</keyword>
<keyword id="KW-0812">Transmembrane</keyword>
<keyword id="KW-1133">Transmembrane helix</keyword>
<comment type="function">
    <text evidence="1">Converts heme B (protoheme IX) to heme O by substitution of the vinyl group on carbon 2 of heme B porphyrin ring with a hydroxyethyl farnesyl side group.</text>
</comment>
<comment type="catalytic activity">
    <reaction evidence="1">
        <text>heme b + (2E,6E)-farnesyl diphosphate + H2O = Fe(II)-heme o + diphosphate</text>
        <dbReference type="Rhea" id="RHEA:28070"/>
        <dbReference type="ChEBI" id="CHEBI:15377"/>
        <dbReference type="ChEBI" id="CHEBI:33019"/>
        <dbReference type="ChEBI" id="CHEBI:60344"/>
        <dbReference type="ChEBI" id="CHEBI:60530"/>
        <dbReference type="ChEBI" id="CHEBI:175763"/>
        <dbReference type="EC" id="2.5.1.141"/>
    </reaction>
</comment>
<comment type="pathway">
    <text evidence="1">Porphyrin-containing compound metabolism; heme O biosynthesis; heme O from protoheme: step 1/1.</text>
</comment>
<comment type="subcellular location">
    <subcellularLocation>
        <location evidence="1">Cell inner membrane</location>
        <topology evidence="1">Multi-pass membrane protein</topology>
    </subcellularLocation>
</comment>
<comment type="miscellaneous">
    <text evidence="1">Carbon 2 of the heme B porphyrin ring is defined according to the Fischer nomenclature.</text>
</comment>
<comment type="similarity">
    <text evidence="1">Belongs to the UbiA prenyltransferase family. Protoheme IX farnesyltransferase subfamily.</text>
</comment>
<comment type="sequence caution" evidence="2">
    <conflict type="erroneous initiation">
        <sequence resource="EMBL-CDS" id="ACA84727"/>
    </conflict>
</comment>
<name>CYOE2_SHEWM</name>
<evidence type="ECO:0000255" key="1">
    <source>
        <dbReference type="HAMAP-Rule" id="MF_00154"/>
    </source>
</evidence>
<evidence type="ECO:0000305" key="2"/>
<dbReference type="EC" id="2.5.1.141" evidence="1"/>
<dbReference type="EMBL" id="CP000961">
    <property type="protein sequence ID" value="ACA84727.1"/>
    <property type="status" value="ALT_INIT"/>
    <property type="molecule type" value="Genomic_DNA"/>
</dbReference>
<dbReference type="SMR" id="B1KQ72"/>
<dbReference type="STRING" id="392500.Swoo_0429"/>
<dbReference type="KEGG" id="swd:Swoo_0429"/>
<dbReference type="eggNOG" id="COG0109">
    <property type="taxonomic scope" value="Bacteria"/>
</dbReference>
<dbReference type="HOGENOM" id="CLU_029631_0_0_6"/>
<dbReference type="UniPathway" id="UPA00834">
    <property type="reaction ID" value="UER00712"/>
</dbReference>
<dbReference type="Proteomes" id="UP000002168">
    <property type="component" value="Chromosome"/>
</dbReference>
<dbReference type="GO" id="GO:0005886">
    <property type="term" value="C:plasma membrane"/>
    <property type="evidence" value="ECO:0007669"/>
    <property type="project" value="UniProtKB-SubCell"/>
</dbReference>
<dbReference type="GO" id="GO:0008495">
    <property type="term" value="F:protoheme IX farnesyltransferase activity"/>
    <property type="evidence" value="ECO:0007669"/>
    <property type="project" value="UniProtKB-UniRule"/>
</dbReference>
<dbReference type="GO" id="GO:0048034">
    <property type="term" value="P:heme O biosynthetic process"/>
    <property type="evidence" value="ECO:0007669"/>
    <property type="project" value="UniProtKB-UniRule"/>
</dbReference>
<dbReference type="CDD" id="cd13957">
    <property type="entry name" value="PT_UbiA_Cox10"/>
    <property type="match status" value="1"/>
</dbReference>
<dbReference type="FunFam" id="1.10.357.140:FF:000001">
    <property type="entry name" value="Protoheme IX farnesyltransferase"/>
    <property type="match status" value="1"/>
</dbReference>
<dbReference type="Gene3D" id="1.10.357.140">
    <property type="entry name" value="UbiA prenyltransferase"/>
    <property type="match status" value="1"/>
</dbReference>
<dbReference type="HAMAP" id="MF_00154">
    <property type="entry name" value="CyoE_CtaB"/>
    <property type="match status" value="1"/>
</dbReference>
<dbReference type="InterPro" id="IPR006369">
    <property type="entry name" value="Protohaem_IX_farnesylTrfase"/>
</dbReference>
<dbReference type="InterPro" id="IPR000537">
    <property type="entry name" value="UbiA_prenyltransferase"/>
</dbReference>
<dbReference type="InterPro" id="IPR030470">
    <property type="entry name" value="UbiA_prenylTrfase_CS"/>
</dbReference>
<dbReference type="InterPro" id="IPR044878">
    <property type="entry name" value="UbiA_sf"/>
</dbReference>
<dbReference type="NCBIfam" id="TIGR01473">
    <property type="entry name" value="cyoE_ctaB"/>
    <property type="match status" value="1"/>
</dbReference>
<dbReference type="NCBIfam" id="NF003348">
    <property type="entry name" value="PRK04375.1-1"/>
    <property type="match status" value="1"/>
</dbReference>
<dbReference type="PANTHER" id="PTHR43448">
    <property type="entry name" value="PROTOHEME IX FARNESYLTRANSFERASE, MITOCHONDRIAL"/>
    <property type="match status" value="1"/>
</dbReference>
<dbReference type="PANTHER" id="PTHR43448:SF2">
    <property type="entry name" value="PROTOHEME IX FARNESYLTRANSFERASE, MITOCHONDRIAL"/>
    <property type="match status" value="1"/>
</dbReference>
<dbReference type="Pfam" id="PF01040">
    <property type="entry name" value="UbiA"/>
    <property type="match status" value="1"/>
</dbReference>
<dbReference type="PROSITE" id="PS00943">
    <property type="entry name" value="UBIA"/>
    <property type="match status" value="1"/>
</dbReference>